<evidence type="ECO:0000250" key="1"/>
<evidence type="ECO:0000255" key="2">
    <source>
        <dbReference type="HAMAP-Rule" id="MF_00047"/>
    </source>
</evidence>
<comment type="function">
    <text evidence="2">Cell wall formation.</text>
</comment>
<comment type="catalytic activity">
    <reaction evidence="2">
        <text>2 D-alanine + ATP = D-alanyl-D-alanine + ADP + phosphate + H(+)</text>
        <dbReference type="Rhea" id="RHEA:11224"/>
        <dbReference type="ChEBI" id="CHEBI:15378"/>
        <dbReference type="ChEBI" id="CHEBI:30616"/>
        <dbReference type="ChEBI" id="CHEBI:43474"/>
        <dbReference type="ChEBI" id="CHEBI:57416"/>
        <dbReference type="ChEBI" id="CHEBI:57822"/>
        <dbReference type="ChEBI" id="CHEBI:456216"/>
        <dbReference type="EC" id="6.3.2.4"/>
    </reaction>
</comment>
<comment type="cofactor">
    <cofactor evidence="1">
        <name>Mg(2+)</name>
        <dbReference type="ChEBI" id="CHEBI:18420"/>
    </cofactor>
    <cofactor evidence="1">
        <name>Mn(2+)</name>
        <dbReference type="ChEBI" id="CHEBI:29035"/>
    </cofactor>
    <text evidence="1">Binds 2 magnesium or manganese ions per subunit.</text>
</comment>
<comment type="pathway">
    <text evidence="2">Cell wall biogenesis; peptidoglycan biosynthesis.</text>
</comment>
<comment type="subcellular location">
    <subcellularLocation>
        <location evidence="2">Cytoplasm</location>
    </subcellularLocation>
</comment>
<comment type="similarity">
    <text evidence="2">Belongs to the D-alanine--D-alanine ligase family.</text>
</comment>
<name>DDLB_CHRVO</name>
<feature type="chain" id="PRO_0000177806" description="D-alanine--D-alanine ligase B">
    <location>
        <begin position="1"/>
        <end position="303"/>
    </location>
</feature>
<feature type="domain" description="ATP-grasp" evidence="2">
    <location>
        <begin position="103"/>
        <end position="298"/>
    </location>
</feature>
<feature type="binding site" evidence="2">
    <location>
        <begin position="129"/>
        <end position="184"/>
    </location>
    <ligand>
        <name>ATP</name>
        <dbReference type="ChEBI" id="CHEBI:30616"/>
    </ligand>
</feature>
<feature type="binding site" evidence="2">
    <location>
        <position position="252"/>
    </location>
    <ligand>
        <name>Mg(2+)</name>
        <dbReference type="ChEBI" id="CHEBI:18420"/>
        <label>1</label>
    </ligand>
</feature>
<feature type="binding site" evidence="2">
    <location>
        <position position="265"/>
    </location>
    <ligand>
        <name>Mg(2+)</name>
        <dbReference type="ChEBI" id="CHEBI:18420"/>
        <label>1</label>
    </ligand>
</feature>
<feature type="binding site" evidence="2">
    <location>
        <position position="265"/>
    </location>
    <ligand>
        <name>Mg(2+)</name>
        <dbReference type="ChEBI" id="CHEBI:18420"/>
        <label>2</label>
    </ligand>
</feature>
<feature type="binding site" evidence="2">
    <location>
        <position position="267"/>
    </location>
    <ligand>
        <name>Mg(2+)</name>
        <dbReference type="ChEBI" id="CHEBI:18420"/>
        <label>2</label>
    </ligand>
</feature>
<proteinExistence type="inferred from homology"/>
<organism>
    <name type="scientific">Chromobacterium violaceum (strain ATCC 12472 / DSM 30191 / JCM 1249 / CCUG 213 / NBRC 12614 / NCIMB 9131 / NCTC 9757 / MK)</name>
    <dbReference type="NCBI Taxonomy" id="243365"/>
    <lineage>
        <taxon>Bacteria</taxon>
        <taxon>Pseudomonadati</taxon>
        <taxon>Pseudomonadota</taxon>
        <taxon>Betaproteobacteria</taxon>
        <taxon>Neisseriales</taxon>
        <taxon>Chromobacteriaceae</taxon>
        <taxon>Chromobacterium</taxon>
    </lineage>
</organism>
<sequence>MKQYGKVAVLMGGSSSEREVSLMSGAGVLSALRSKGVDAHGFDPSEKPLSALKEEGFDCVFNILHGPFGEDGTLQGALEALGMPYTGCGVMASAIAMDKWRTKLLWKGAGLPIPAFELLDENSDFDAIERQLGLPIFVKPSTEGSSIGVTKVKQPGELRAAFEEARKYDKVVIAEQFIGGGEYTCAVIGETAYPTIKIEPATEYYDYQAKYFRDDTVYRCPSGLAPEVEARARELALKAFKVLGCRGWSRVDFLMDEAGEIYLLEANTSPGMTSHSLVPMAARAEGIAYEDLCLKVLDTVHVG</sequence>
<dbReference type="EC" id="6.3.2.4" evidence="2"/>
<dbReference type="EMBL" id="AE016825">
    <property type="protein sequence ID" value="AAQ62000.1"/>
    <property type="molecule type" value="Genomic_DNA"/>
</dbReference>
<dbReference type="RefSeq" id="WP_011137887.1">
    <property type="nucleotide sequence ID" value="NC_005085.1"/>
</dbReference>
<dbReference type="SMR" id="Q7NQ01"/>
<dbReference type="STRING" id="243365.CV_4341"/>
<dbReference type="KEGG" id="cvi:CV_4341"/>
<dbReference type="eggNOG" id="COG1181">
    <property type="taxonomic scope" value="Bacteria"/>
</dbReference>
<dbReference type="HOGENOM" id="CLU_039268_1_2_4"/>
<dbReference type="OrthoDB" id="9813261at2"/>
<dbReference type="UniPathway" id="UPA00219"/>
<dbReference type="Proteomes" id="UP000001424">
    <property type="component" value="Chromosome"/>
</dbReference>
<dbReference type="GO" id="GO:0005737">
    <property type="term" value="C:cytoplasm"/>
    <property type="evidence" value="ECO:0007669"/>
    <property type="project" value="UniProtKB-SubCell"/>
</dbReference>
<dbReference type="GO" id="GO:0005524">
    <property type="term" value="F:ATP binding"/>
    <property type="evidence" value="ECO:0007669"/>
    <property type="project" value="UniProtKB-KW"/>
</dbReference>
<dbReference type="GO" id="GO:0008716">
    <property type="term" value="F:D-alanine-D-alanine ligase activity"/>
    <property type="evidence" value="ECO:0007669"/>
    <property type="project" value="UniProtKB-UniRule"/>
</dbReference>
<dbReference type="GO" id="GO:0046872">
    <property type="term" value="F:metal ion binding"/>
    <property type="evidence" value="ECO:0007669"/>
    <property type="project" value="UniProtKB-KW"/>
</dbReference>
<dbReference type="GO" id="GO:0071555">
    <property type="term" value="P:cell wall organization"/>
    <property type="evidence" value="ECO:0007669"/>
    <property type="project" value="UniProtKB-KW"/>
</dbReference>
<dbReference type="GO" id="GO:0009252">
    <property type="term" value="P:peptidoglycan biosynthetic process"/>
    <property type="evidence" value="ECO:0007669"/>
    <property type="project" value="UniProtKB-UniRule"/>
</dbReference>
<dbReference type="GO" id="GO:0008360">
    <property type="term" value="P:regulation of cell shape"/>
    <property type="evidence" value="ECO:0007669"/>
    <property type="project" value="UniProtKB-KW"/>
</dbReference>
<dbReference type="FunFam" id="3.30.470.20:FF:000008">
    <property type="entry name" value="D-alanine--D-alanine ligase"/>
    <property type="match status" value="1"/>
</dbReference>
<dbReference type="FunFam" id="3.40.50.20:FF:000013">
    <property type="entry name" value="D-alanine--D-alanine ligase"/>
    <property type="match status" value="1"/>
</dbReference>
<dbReference type="Gene3D" id="3.40.50.20">
    <property type="match status" value="1"/>
</dbReference>
<dbReference type="Gene3D" id="3.30.1490.20">
    <property type="entry name" value="ATP-grasp fold, A domain"/>
    <property type="match status" value="1"/>
</dbReference>
<dbReference type="Gene3D" id="3.30.470.20">
    <property type="entry name" value="ATP-grasp fold, B domain"/>
    <property type="match status" value="1"/>
</dbReference>
<dbReference type="HAMAP" id="MF_00047">
    <property type="entry name" value="Dala_Dala_lig"/>
    <property type="match status" value="1"/>
</dbReference>
<dbReference type="InterPro" id="IPR011761">
    <property type="entry name" value="ATP-grasp"/>
</dbReference>
<dbReference type="InterPro" id="IPR013815">
    <property type="entry name" value="ATP_grasp_subdomain_1"/>
</dbReference>
<dbReference type="InterPro" id="IPR000291">
    <property type="entry name" value="D-Ala_lig_Van_CS"/>
</dbReference>
<dbReference type="InterPro" id="IPR005905">
    <property type="entry name" value="D_ala_D_ala"/>
</dbReference>
<dbReference type="InterPro" id="IPR011095">
    <property type="entry name" value="Dala_Dala_lig_C"/>
</dbReference>
<dbReference type="InterPro" id="IPR011127">
    <property type="entry name" value="Dala_Dala_lig_N"/>
</dbReference>
<dbReference type="InterPro" id="IPR016185">
    <property type="entry name" value="PreATP-grasp_dom_sf"/>
</dbReference>
<dbReference type="NCBIfam" id="TIGR01205">
    <property type="entry name" value="D_ala_D_alaTIGR"/>
    <property type="match status" value="1"/>
</dbReference>
<dbReference type="NCBIfam" id="NF002378">
    <property type="entry name" value="PRK01372.1"/>
    <property type="match status" value="1"/>
</dbReference>
<dbReference type="PANTHER" id="PTHR23132">
    <property type="entry name" value="D-ALANINE--D-ALANINE LIGASE"/>
    <property type="match status" value="1"/>
</dbReference>
<dbReference type="PANTHER" id="PTHR23132:SF23">
    <property type="entry name" value="D-ALANINE--D-ALANINE LIGASE B"/>
    <property type="match status" value="1"/>
</dbReference>
<dbReference type="Pfam" id="PF07478">
    <property type="entry name" value="Dala_Dala_lig_C"/>
    <property type="match status" value="1"/>
</dbReference>
<dbReference type="Pfam" id="PF01820">
    <property type="entry name" value="Dala_Dala_lig_N"/>
    <property type="match status" value="1"/>
</dbReference>
<dbReference type="PIRSF" id="PIRSF039102">
    <property type="entry name" value="Ddl/VanB"/>
    <property type="match status" value="1"/>
</dbReference>
<dbReference type="SUPFAM" id="SSF56059">
    <property type="entry name" value="Glutathione synthetase ATP-binding domain-like"/>
    <property type="match status" value="1"/>
</dbReference>
<dbReference type="SUPFAM" id="SSF52440">
    <property type="entry name" value="PreATP-grasp domain"/>
    <property type="match status" value="1"/>
</dbReference>
<dbReference type="PROSITE" id="PS50975">
    <property type="entry name" value="ATP_GRASP"/>
    <property type="match status" value="1"/>
</dbReference>
<dbReference type="PROSITE" id="PS00843">
    <property type="entry name" value="DALA_DALA_LIGASE_1"/>
    <property type="match status" value="1"/>
</dbReference>
<dbReference type="PROSITE" id="PS00844">
    <property type="entry name" value="DALA_DALA_LIGASE_2"/>
    <property type="match status" value="1"/>
</dbReference>
<reference key="1">
    <citation type="journal article" date="2003" name="Proc. Natl. Acad. Sci. U.S.A.">
        <title>The complete genome sequence of Chromobacterium violaceum reveals remarkable and exploitable bacterial adaptability.</title>
        <authorList>
            <person name="Vasconcelos A.T.R."/>
            <person name="de Almeida D.F."/>
            <person name="Hungria M."/>
            <person name="Guimaraes C.T."/>
            <person name="Antonio R.V."/>
            <person name="Almeida F.C."/>
            <person name="de Almeida L.G.P."/>
            <person name="de Almeida R."/>
            <person name="Alves-Gomes J.A."/>
            <person name="Andrade E.M."/>
            <person name="Araripe J."/>
            <person name="de Araujo M.F.F."/>
            <person name="Astolfi-Filho S."/>
            <person name="Azevedo V."/>
            <person name="Baptista A.J."/>
            <person name="Bataus L.A.M."/>
            <person name="Batista J.S."/>
            <person name="Belo A."/>
            <person name="van den Berg C."/>
            <person name="Bogo M."/>
            <person name="Bonatto S."/>
            <person name="Bordignon J."/>
            <person name="Brigido M.M."/>
            <person name="Brito C.A."/>
            <person name="Brocchi M."/>
            <person name="Burity H.A."/>
            <person name="Camargo A.A."/>
            <person name="Cardoso D.D.P."/>
            <person name="Carneiro N.P."/>
            <person name="Carraro D.M."/>
            <person name="Carvalho C.M.B."/>
            <person name="Cascardo J.C.M."/>
            <person name="Cavada B.S."/>
            <person name="Chueire L.M.O."/>
            <person name="Creczynski-Pasa T.B."/>
            <person name="Cunha-Junior N.C."/>
            <person name="Fagundes N."/>
            <person name="Falcao C.L."/>
            <person name="Fantinatti F."/>
            <person name="Farias I.P."/>
            <person name="Felipe M.S.S."/>
            <person name="Ferrari L.P."/>
            <person name="Ferro J.A."/>
            <person name="Ferro M.I.T."/>
            <person name="Franco G.R."/>
            <person name="Freitas N.S.A."/>
            <person name="Furlan L.R."/>
            <person name="Gazzinelli R.T."/>
            <person name="Gomes E.A."/>
            <person name="Goncalves P.R."/>
            <person name="Grangeiro T.B."/>
            <person name="Grattapaglia D."/>
            <person name="Grisard E.C."/>
            <person name="Hanna E.S."/>
            <person name="Jardim S.N."/>
            <person name="Laurino J."/>
            <person name="Leoi L.C.T."/>
            <person name="Lima L.F.A."/>
            <person name="Loureiro M.F."/>
            <person name="Lyra M.C.C.P."/>
            <person name="Madeira H.M.F."/>
            <person name="Manfio G.P."/>
            <person name="Maranhao A.Q."/>
            <person name="Martins W.S."/>
            <person name="di Mauro S.M.Z."/>
            <person name="de Medeiros S.R.B."/>
            <person name="Meissner R.V."/>
            <person name="Moreira M.A.M."/>
            <person name="Nascimento F.F."/>
            <person name="Nicolas M.F."/>
            <person name="Oliveira J.G."/>
            <person name="Oliveira S.C."/>
            <person name="Paixao R.F.C."/>
            <person name="Parente J.A."/>
            <person name="Pedrosa F.O."/>
            <person name="Pena S.D.J."/>
            <person name="Pereira J.O."/>
            <person name="Pereira M."/>
            <person name="Pinto L.S.R.C."/>
            <person name="Pinto L.S."/>
            <person name="Porto J.I.R."/>
            <person name="Potrich D.P."/>
            <person name="Ramalho-Neto C.E."/>
            <person name="Reis A.M.M."/>
            <person name="Rigo L.U."/>
            <person name="Rondinelli E."/>
            <person name="Santos E.B.P."/>
            <person name="Santos F.R."/>
            <person name="Schneider M.P.C."/>
            <person name="Seuanez H.N."/>
            <person name="Silva A.M.R."/>
            <person name="da Silva A.L.C."/>
            <person name="Silva D.W."/>
            <person name="Silva R."/>
            <person name="Simoes I.C."/>
            <person name="Simon D."/>
            <person name="Soares C.M.A."/>
            <person name="Soares R.B.A."/>
            <person name="Souza E.M."/>
            <person name="Souza K.R.L."/>
            <person name="Souza R.C."/>
            <person name="Steffens M.B.R."/>
            <person name="Steindel M."/>
            <person name="Teixeira S.R."/>
            <person name="Urmenyi T."/>
            <person name="Vettore A."/>
            <person name="Wassem R."/>
            <person name="Zaha A."/>
            <person name="Simpson A.J.G."/>
        </authorList>
    </citation>
    <scope>NUCLEOTIDE SEQUENCE [LARGE SCALE GENOMIC DNA]</scope>
    <source>
        <strain>ATCC 12472 / DSM 30191 / JCM 1249 / CCUG 213 / NBRC 12614 / NCIMB 9131 / NCTC 9757 / MK</strain>
    </source>
</reference>
<keyword id="KW-0067">ATP-binding</keyword>
<keyword id="KW-0133">Cell shape</keyword>
<keyword id="KW-0961">Cell wall biogenesis/degradation</keyword>
<keyword id="KW-0963">Cytoplasm</keyword>
<keyword id="KW-0436">Ligase</keyword>
<keyword id="KW-0460">Magnesium</keyword>
<keyword id="KW-0464">Manganese</keyword>
<keyword id="KW-0479">Metal-binding</keyword>
<keyword id="KW-0547">Nucleotide-binding</keyword>
<keyword id="KW-0573">Peptidoglycan synthesis</keyword>
<keyword id="KW-1185">Reference proteome</keyword>
<protein>
    <recommendedName>
        <fullName evidence="2">D-alanine--D-alanine ligase B</fullName>
        <ecNumber evidence="2">6.3.2.4</ecNumber>
    </recommendedName>
    <alternativeName>
        <fullName evidence="2">D-Ala-D-Ala ligase B</fullName>
    </alternativeName>
    <alternativeName>
        <fullName evidence="2">D-alanylalanine synthetase B</fullName>
    </alternativeName>
</protein>
<gene>
    <name evidence="2" type="primary">ddlB</name>
    <name type="ordered locus">CV_4341</name>
</gene>
<accession>Q7NQ01</accession>